<dbReference type="EMBL" id="L42023">
    <property type="protein sequence ID" value="AAC23382.1"/>
    <property type="molecule type" value="Genomic_DNA"/>
</dbReference>
<dbReference type="PIR" id="F64041">
    <property type="entry name" value="F64041"/>
</dbReference>
<dbReference type="RefSeq" id="NP_439880.1">
    <property type="nucleotide sequence ID" value="NC_000907.1"/>
</dbReference>
<dbReference type="STRING" id="71421.HI_1738"/>
<dbReference type="EnsemblBacteria" id="AAC23382">
    <property type="protein sequence ID" value="AAC23382"/>
    <property type="gene ID" value="HI_1738"/>
</dbReference>
<dbReference type="KEGG" id="hin:HI_1738"/>
<dbReference type="PATRIC" id="fig|71421.8.peg.1819"/>
<dbReference type="eggNOG" id="COG1296">
    <property type="taxonomic scope" value="Bacteria"/>
</dbReference>
<dbReference type="HOGENOM" id="CLU_065777_4_0_6"/>
<dbReference type="OrthoDB" id="3181706at2"/>
<dbReference type="PhylomeDB" id="P44302"/>
<dbReference type="BioCyc" id="HINF71421:G1GJ1-1754-MONOMER"/>
<dbReference type="Proteomes" id="UP000000579">
    <property type="component" value="Chromosome"/>
</dbReference>
<dbReference type="GO" id="GO:0005886">
    <property type="term" value="C:plasma membrane"/>
    <property type="evidence" value="ECO:0007669"/>
    <property type="project" value="UniProtKB-SubCell"/>
</dbReference>
<dbReference type="GO" id="GO:1903785">
    <property type="term" value="P:L-valine transmembrane transport"/>
    <property type="evidence" value="ECO:0000318"/>
    <property type="project" value="GO_Central"/>
</dbReference>
<dbReference type="InterPro" id="IPR004471">
    <property type="entry name" value="Brnchd-chn_aa_trnsp_AzlC"/>
</dbReference>
<dbReference type="InterPro" id="IPR011606">
    <property type="entry name" value="Brnchd-chn_aa_trnsp_permease"/>
</dbReference>
<dbReference type="NCBIfam" id="TIGR00346">
    <property type="entry name" value="azlC"/>
    <property type="match status" value="1"/>
</dbReference>
<dbReference type="PANTHER" id="PTHR34979">
    <property type="entry name" value="INNER MEMBRANE PROTEIN YGAZ"/>
    <property type="match status" value="1"/>
</dbReference>
<dbReference type="PANTHER" id="PTHR34979:SF1">
    <property type="entry name" value="INNER MEMBRANE PROTEIN YGAZ"/>
    <property type="match status" value="1"/>
</dbReference>
<dbReference type="Pfam" id="PF03591">
    <property type="entry name" value="AzlC"/>
    <property type="match status" value="1"/>
</dbReference>
<reference key="1">
    <citation type="journal article" date="1995" name="Science">
        <title>Whole-genome random sequencing and assembly of Haemophilus influenzae Rd.</title>
        <authorList>
            <person name="Fleischmann R.D."/>
            <person name="Adams M.D."/>
            <person name="White O."/>
            <person name="Clayton R.A."/>
            <person name="Kirkness E.F."/>
            <person name="Kerlavage A.R."/>
            <person name="Bult C.J."/>
            <person name="Tomb J.-F."/>
            <person name="Dougherty B.A."/>
            <person name="Merrick J.M."/>
            <person name="McKenney K."/>
            <person name="Sutton G.G."/>
            <person name="FitzHugh W."/>
            <person name="Fields C.A."/>
            <person name="Gocayne J.D."/>
            <person name="Scott J.D."/>
            <person name="Shirley R."/>
            <person name="Liu L.-I."/>
            <person name="Glodek A."/>
            <person name="Kelley J.M."/>
            <person name="Weidman J.F."/>
            <person name="Phillips C.A."/>
            <person name="Spriggs T."/>
            <person name="Hedblom E."/>
            <person name="Cotton M.D."/>
            <person name="Utterback T.R."/>
            <person name="Hanna M.C."/>
            <person name="Nguyen D.T."/>
            <person name="Saudek D.M."/>
            <person name="Brandon R.C."/>
            <person name="Fine L.D."/>
            <person name="Fritchman J.L."/>
            <person name="Fuhrmann J.L."/>
            <person name="Geoghagen N.S.M."/>
            <person name="Gnehm C.L."/>
            <person name="McDonald L.A."/>
            <person name="Small K.V."/>
            <person name="Fraser C.M."/>
            <person name="Smith H.O."/>
            <person name="Venter J.C."/>
        </authorList>
    </citation>
    <scope>NUCLEOTIDE SEQUENCE [LARGE SCALE GENOMIC DNA]</scope>
    <source>
        <strain>ATCC 51907 / DSM 11121 / KW20 / Rd</strain>
    </source>
</reference>
<keyword id="KW-1003">Cell membrane</keyword>
<keyword id="KW-0472">Membrane</keyword>
<keyword id="KW-1185">Reference proteome</keyword>
<keyword id="KW-0812">Transmembrane</keyword>
<keyword id="KW-1133">Transmembrane helix</keyword>
<keyword id="KW-0813">Transport</keyword>
<name>Y1738_HAEIN</name>
<evidence type="ECO:0000255" key="1"/>
<evidence type="ECO:0000305" key="2"/>
<protein>
    <recommendedName>
        <fullName>Uncharacterized membrane protein HI_1738</fullName>
    </recommendedName>
</protein>
<gene>
    <name type="ordered locus">HI_1738</name>
</gene>
<feature type="chain" id="PRO_0000111782" description="Uncharacterized membrane protein HI_1738">
    <location>
        <begin position="1"/>
        <end position="244"/>
    </location>
</feature>
<feature type="transmembrane region" description="Helical" evidence="1">
    <location>
        <begin position="21"/>
        <end position="41"/>
    </location>
</feature>
<feature type="transmembrane region" description="Helical" evidence="1">
    <location>
        <begin position="44"/>
        <end position="64"/>
    </location>
</feature>
<feature type="transmembrane region" description="Helical" evidence="1">
    <location>
        <begin position="66"/>
        <end position="86"/>
    </location>
</feature>
<feature type="transmembrane region" description="Helical" evidence="1">
    <location>
        <begin position="139"/>
        <end position="159"/>
    </location>
</feature>
<feature type="transmembrane region" description="Helical" evidence="1">
    <location>
        <begin position="165"/>
        <end position="185"/>
    </location>
</feature>
<feature type="transmembrane region" description="Helical" evidence="1">
    <location>
        <begin position="199"/>
        <end position="219"/>
    </location>
</feature>
<comment type="subcellular location">
    <subcellularLocation>
        <location evidence="2">Cell membrane</location>
        <topology evidence="2">Multi-pass membrane protein</topology>
    </subcellularLocation>
</comment>
<comment type="similarity">
    <text evidence="2">Belongs to the AzlC family.</text>
</comment>
<sequence>MNLSQQNQHSNPITEAAKATFPYSVPMIAGFLFLGIAYGIYMKALGFGFLYPTLMALLIYAGSVEFIAAGALIAPFSPISVLLITLMISARQIFYGISMLEKYGIHIGKKRWYLITTLVDESFSLNYMAKIPPHLDKGWYMFFVSLYLHIYWVLGAAMGNLFGTVLPFNLKGVEFSMTALFLVIFAENWLKGKSHESSLLGLGIALVFLLIIGKEYFLIPTLIGIWLILTMRITKLETKLESLK</sequence>
<organism>
    <name type="scientific">Haemophilus influenzae (strain ATCC 51907 / DSM 11121 / KW20 / Rd)</name>
    <dbReference type="NCBI Taxonomy" id="71421"/>
    <lineage>
        <taxon>Bacteria</taxon>
        <taxon>Pseudomonadati</taxon>
        <taxon>Pseudomonadota</taxon>
        <taxon>Gammaproteobacteria</taxon>
        <taxon>Pasteurellales</taxon>
        <taxon>Pasteurellaceae</taxon>
        <taxon>Haemophilus</taxon>
    </lineage>
</organism>
<accession>P44302</accession>
<proteinExistence type="inferred from homology"/>